<protein>
    <recommendedName>
        <fullName>Uncharacterized protein RP232</fullName>
    </recommendedName>
</protein>
<dbReference type="EMBL" id="AJ235271">
    <property type="protein sequence ID" value="CAA14695.1"/>
    <property type="molecule type" value="Genomic_DNA"/>
</dbReference>
<dbReference type="PIR" id="E71677">
    <property type="entry name" value="E71677"/>
</dbReference>
<dbReference type="RefSeq" id="NP_220618.1">
    <property type="nucleotide sequence ID" value="NC_000963.1"/>
</dbReference>
<dbReference type="RefSeq" id="WP_004598559.1">
    <property type="nucleotide sequence ID" value="NC_000963.1"/>
</dbReference>
<dbReference type="SMR" id="Q9ZDU2"/>
<dbReference type="STRING" id="272947.gene:17555313"/>
<dbReference type="EnsemblBacteria" id="CAA14695">
    <property type="protein sequence ID" value="CAA14695"/>
    <property type="gene ID" value="CAA14695"/>
</dbReference>
<dbReference type="KEGG" id="rpr:RP232"/>
<dbReference type="PATRIC" id="fig|272947.5.peg.240"/>
<dbReference type="eggNOG" id="COG1520">
    <property type="taxonomic scope" value="Bacteria"/>
</dbReference>
<dbReference type="HOGENOM" id="CLU_655334_0_0_5"/>
<dbReference type="OrthoDB" id="5290752at2"/>
<dbReference type="Proteomes" id="UP000002480">
    <property type="component" value="Chromosome"/>
</dbReference>
<dbReference type="Gene3D" id="2.130.10.10">
    <property type="entry name" value="YVTN repeat-like/Quinoprotein amine dehydrogenase"/>
    <property type="match status" value="1"/>
</dbReference>
<dbReference type="InterPro" id="IPR018391">
    <property type="entry name" value="PQQ_b-propeller_rpt"/>
</dbReference>
<dbReference type="InterPro" id="IPR002372">
    <property type="entry name" value="PQQ_rpt_dom"/>
</dbReference>
<dbReference type="InterPro" id="IPR011047">
    <property type="entry name" value="Quinoprotein_ADH-like_sf"/>
</dbReference>
<dbReference type="InterPro" id="IPR015943">
    <property type="entry name" value="WD40/YVTN_repeat-like_dom_sf"/>
</dbReference>
<dbReference type="PANTHER" id="PTHR34512">
    <property type="entry name" value="CELL SURFACE PROTEIN"/>
    <property type="match status" value="1"/>
</dbReference>
<dbReference type="PANTHER" id="PTHR34512:SF30">
    <property type="entry name" value="OUTER MEMBRANE PROTEIN ASSEMBLY FACTOR BAMB"/>
    <property type="match status" value="1"/>
</dbReference>
<dbReference type="Pfam" id="PF13360">
    <property type="entry name" value="PQQ_2"/>
    <property type="match status" value="1"/>
</dbReference>
<dbReference type="SMART" id="SM00564">
    <property type="entry name" value="PQQ"/>
    <property type="match status" value="4"/>
</dbReference>
<dbReference type="SUPFAM" id="SSF50998">
    <property type="entry name" value="Quinoprotein alcohol dehydrogenase-like"/>
    <property type="match status" value="1"/>
</dbReference>
<sequence>MKKKLALLLLPFILISCNGLGSKSVKNIVDLTPKLVIQTNEPIYLDSNTKIYPFNVNMLKNKQYSPAKSKMIAEPVFIGDMIYTLDIRANISAFSIEKNKIIWSYNLSKHKKDNYIGGGILHHNGKLYITYGARLLIVLDAKSGYEIIRKELPDIIRIKPIALNDHTILVQTISNQTIALDSETLKTLWDHESIAEILSTSYSMIPIVQHDNVIVTYNTGQVLALNIKNGEVKWNFEFTNLNDHTAIPNFDTSSILCTPVHDSMNLYIATGLGKLIKLNLLTGSVLWQINADDIQSMSLIGNSLFIINNARQIAALNPETGKVKFVADLNYEKNDKRLKSTTFLVPFVGVDNNNQRSLNVISVDGILYNFNIDSNGLKMNPHIIKIIKNIRYYGLRSNNTLYFSTDRQVIFGSQI</sequence>
<accession>Q9ZDU2</accession>
<name>Y232_RICPR</name>
<gene>
    <name type="ordered locus">RP232</name>
</gene>
<proteinExistence type="predicted"/>
<reference key="1">
    <citation type="journal article" date="1998" name="Nature">
        <title>The genome sequence of Rickettsia prowazekii and the origin of mitochondria.</title>
        <authorList>
            <person name="Andersson S.G.E."/>
            <person name="Zomorodipour A."/>
            <person name="Andersson J.O."/>
            <person name="Sicheritz-Ponten T."/>
            <person name="Alsmark U.C.M."/>
            <person name="Podowski R.M."/>
            <person name="Naeslund A.K."/>
            <person name="Eriksson A.-S."/>
            <person name="Winkler H.H."/>
            <person name="Kurland C.G."/>
        </authorList>
    </citation>
    <scope>NUCLEOTIDE SEQUENCE [LARGE SCALE GENOMIC DNA]</scope>
    <source>
        <strain>Madrid E</strain>
    </source>
</reference>
<keyword id="KW-1185">Reference proteome</keyword>
<feature type="chain" id="PRO_0000101337" description="Uncharacterized protein RP232">
    <location>
        <begin position="1"/>
        <end position="415"/>
    </location>
</feature>
<organism>
    <name type="scientific">Rickettsia prowazekii (strain Madrid E)</name>
    <dbReference type="NCBI Taxonomy" id="272947"/>
    <lineage>
        <taxon>Bacteria</taxon>
        <taxon>Pseudomonadati</taxon>
        <taxon>Pseudomonadota</taxon>
        <taxon>Alphaproteobacteria</taxon>
        <taxon>Rickettsiales</taxon>
        <taxon>Rickettsiaceae</taxon>
        <taxon>Rickettsieae</taxon>
        <taxon>Rickettsia</taxon>
        <taxon>typhus group</taxon>
    </lineage>
</organism>